<comment type="function">
    <text evidence="3 4">Transcription factor; part of the gene cluster that mediates the biosynthesis of the diterpene ent-pimara-8(14),15-diene (PD) (PubMed:22506079, PubMed:27098256). Acts as a positive regulator for the cluster gene (PubMed:22506079). Down-regulates the expression of the penicillin gene cluster, two putative polyketide clusters, and one putative nonribosomal peptide cluster (PubMed:22506079).</text>
</comment>
<comment type="subcellular location">
    <subcellularLocation>
        <location evidence="1">Nucleus</location>
    </subcellularLocation>
</comment>
<proteinExistence type="inferred from homology"/>
<gene>
    <name evidence="5" type="primary">pbcR</name>
    <name type="ORF">AN1599</name>
    <name type="ORF">ANIA_01599</name>
</gene>
<organism>
    <name type="scientific">Emericella nidulans (strain FGSC A4 / ATCC 38163 / CBS 112.46 / NRRL 194 / M139)</name>
    <name type="common">Aspergillus nidulans</name>
    <dbReference type="NCBI Taxonomy" id="227321"/>
    <lineage>
        <taxon>Eukaryota</taxon>
        <taxon>Fungi</taxon>
        <taxon>Dikarya</taxon>
        <taxon>Ascomycota</taxon>
        <taxon>Pezizomycotina</taxon>
        <taxon>Eurotiomycetes</taxon>
        <taxon>Eurotiomycetidae</taxon>
        <taxon>Eurotiales</taxon>
        <taxon>Aspergillaceae</taxon>
        <taxon>Aspergillus</taxon>
        <taxon>Aspergillus subgen. Nidulantes</taxon>
    </lineage>
</organism>
<sequence>MYPWSSTGTSPFSHPDNEGAESGDMSMGEEQQQPHQRRQKFNNLRACQSCRASKVRCDQPNPGMPCLRCQKSGKPCVDAASQPGKRQRQPINSILEMESRIETILSSAELQDSAGDGETAHSTALRSPSQLSHHIQPFQHLPMGFAIPFNGGNSGTEDLNSSIRSWLNDNITDLDARTTETIFSHYLTNMVPTFPVVVFATGTTAADVRRNNPILFLAILDVASSGFCALETQRKLRKLIVQAYVHCMLRTEQYTLGLLQALIVSATWYRTIEPVEPGEQMDIYQISHTAANMALIMRLGESLNAKSWGGPMFPRREMKKGPGSAFQADSLEARRVWLGCHYICSNTSMSLRAPNIMRWTRLMDECLEVLENSPAALLSDRLLCQHIRLQHITEEFAMHLSAEEASAPAKSRAIQIQVTHRAFKRQLSEWRRTVGDGWDAHCTATSDDVPEDNAQRLTPPPPIVAIEPHAITEFMDTIDNIFRVFTSLDMSTIRALPAMYLIRIIYTFIILVKLYFAAAKLPAQDAVLQVDGLQVSRRFNRVIQMTAGWGPLWPATKLTTVFTKMRSWFESGGDNNCQRLQQAAAWLTGWELKPPSQGRDAHAMNMAEVVSDDGSIVASSSRGPASWVPSLASTDVDTLAFSHEPPLGTEFSIAPPPFRSMSCATKSCSPQAGAAEFMHDEEVPLEGQRLGDLPNIDQMDDVGMDWSQYTNMGFDLYNLDAPFLPNPPSGFDPDAAMKDNCADRNT</sequence>
<accession>A0A1U8QL22</accession>
<accession>C8VN92</accession>
<accession>Q5BCY1</accession>
<keyword id="KW-0238">DNA-binding</keyword>
<keyword id="KW-0479">Metal-binding</keyword>
<keyword id="KW-0539">Nucleus</keyword>
<keyword id="KW-1185">Reference proteome</keyword>
<keyword id="KW-0804">Transcription</keyword>
<keyword id="KW-0805">Transcription regulation</keyword>
<keyword id="KW-0862">Zinc</keyword>
<feature type="chain" id="PRO_0000450846" description="Transcription factor pbcR">
    <location>
        <begin position="1"/>
        <end position="746"/>
    </location>
</feature>
<feature type="DNA-binding region" description="Zn(2)-C6 fungal-type" evidence="1">
    <location>
        <begin position="47"/>
        <end position="76"/>
    </location>
</feature>
<feature type="region of interest" description="Disordered" evidence="2">
    <location>
        <begin position="1"/>
        <end position="40"/>
    </location>
</feature>
<feature type="region of interest" description="Disordered" evidence="2">
    <location>
        <begin position="109"/>
        <end position="131"/>
    </location>
</feature>
<feature type="compositionally biased region" description="Polar residues" evidence="2">
    <location>
        <begin position="1"/>
        <end position="12"/>
    </location>
</feature>
<feature type="compositionally biased region" description="Polar residues" evidence="2">
    <location>
        <begin position="120"/>
        <end position="131"/>
    </location>
</feature>
<reference key="1">
    <citation type="journal article" date="2005" name="Nature">
        <title>Sequencing of Aspergillus nidulans and comparative analysis with A. fumigatus and A. oryzae.</title>
        <authorList>
            <person name="Galagan J.E."/>
            <person name="Calvo S.E."/>
            <person name="Cuomo C."/>
            <person name="Ma L.-J."/>
            <person name="Wortman J.R."/>
            <person name="Batzoglou S."/>
            <person name="Lee S.-I."/>
            <person name="Bastuerkmen M."/>
            <person name="Spevak C.C."/>
            <person name="Clutterbuck J."/>
            <person name="Kapitonov V."/>
            <person name="Jurka J."/>
            <person name="Scazzocchio C."/>
            <person name="Farman M.L."/>
            <person name="Butler J."/>
            <person name="Purcell S."/>
            <person name="Harris S."/>
            <person name="Braus G.H."/>
            <person name="Draht O."/>
            <person name="Busch S."/>
            <person name="D'Enfert C."/>
            <person name="Bouchier C."/>
            <person name="Goldman G.H."/>
            <person name="Bell-Pedersen D."/>
            <person name="Griffiths-Jones S."/>
            <person name="Doonan J.H."/>
            <person name="Yu J."/>
            <person name="Vienken K."/>
            <person name="Pain A."/>
            <person name="Freitag M."/>
            <person name="Selker E.U."/>
            <person name="Archer D.B."/>
            <person name="Penalva M.A."/>
            <person name="Oakley B.R."/>
            <person name="Momany M."/>
            <person name="Tanaka T."/>
            <person name="Kumagai T."/>
            <person name="Asai K."/>
            <person name="Machida M."/>
            <person name="Nierman W.C."/>
            <person name="Denning D.W."/>
            <person name="Caddick M.X."/>
            <person name="Hynes M."/>
            <person name="Paoletti M."/>
            <person name="Fischer R."/>
            <person name="Miller B.L."/>
            <person name="Dyer P.S."/>
            <person name="Sachs M.S."/>
            <person name="Osmani S.A."/>
            <person name="Birren B.W."/>
        </authorList>
    </citation>
    <scope>NUCLEOTIDE SEQUENCE [LARGE SCALE GENOMIC DNA]</scope>
    <source>
        <strain>FGSC A4 / ATCC 38163 / CBS 112.46 / NRRL 194 / M139</strain>
    </source>
</reference>
<reference key="2">
    <citation type="journal article" date="2009" name="Fungal Genet. Biol.">
        <title>The 2008 update of the Aspergillus nidulans genome annotation: a community effort.</title>
        <authorList>
            <person name="Wortman J.R."/>
            <person name="Gilsenan J.M."/>
            <person name="Joardar V."/>
            <person name="Deegan J."/>
            <person name="Clutterbuck J."/>
            <person name="Andersen M.R."/>
            <person name="Archer D."/>
            <person name="Bencina M."/>
            <person name="Braus G."/>
            <person name="Coutinho P."/>
            <person name="von Dohren H."/>
            <person name="Doonan J."/>
            <person name="Driessen A.J."/>
            <person name="Durek P."/>
            <person name="Espeso E."/>
            <person name="Fekete E."/>
            <person name="Flipphi M."/>
            <person name="Estrada C.G."/>
            <person name="Geysens S."/>
            <person name="Goldman G."/>
            <person name="de Groot P.W."/>
            <person name="Hansen K."/>
            <person name="Harris S.D."/>
            <person name="Heinekamp T."/>
            <person name="Helmstaedt K."/>
            <person name="Henrissat B."/>
            <person name="Hofmann G."/>
            <person name="Homan T."/>
            <person name="Horio T."/>
            <person name="Horiuchi H."/>
            <person name="James S."/>
            <person name="Jones M."/>
            <person name="Karaffa L."/>
            <person name="Karanyi Z."/>
            <person name="Kato M."/>
            <person name="Keller N."/>
            <person name="Kelly D.E."/>
            <person name="Kiel J.A."/>
            <person name="Kim J.M."/>
            <person name="van der Klei I.J."/>
            <person name="Klis F.M."/>
            <person name="Kovalchuk A."/>
            <person name="Krasevec N."/>
            <person name="Kubicek C.P."/>
            <person name="Liu B."/>
            <person name="Maccabe A."/>
            <person name="Meyer V."/>
            <person name="Mirabito P."/>
            <person name="Miskei M."/>
            <person name="Mos M."/>
            <person name="Mullins J."/>
            <person name="Nelson D.R."/>
            <person name="Nielsen J."/>
            <person name="Oakley B.R."/>
            <person name="Osmani S.A."/>
            <person name="Pakula T."/>
            <person name="Paszewski A."/>
            <person name="Paulsen I."/>
            <person name="Pilsyk S."/>
            <person name="Pocsi I."/>
            <person name="Punt P.J."/>
            <person name="Ram A.F."/>
            <person name="Ren Q."/>
            <person name="Robellet X."/>
            <person name="Robson G."/>
            <person name="Seiboth B."/>
            <person name="van Solingen P."/>
            <person name="Specht T."/>
            <person name="Sun J."/>
            <person name="Taheri-Talesh N."/>
            <person name="Takeshita N."/>
            <person name="Ussery D."/>
            <person name="vanKuyk P.A."/>
            <person name="Visser H."/>
            <person name="van de Vondervoort P.J."/>
            <person name="de Vries R.P."/>
            <person name="Walton J."/>
            <person name="Xiang X."/>
            <person name="Xiong Y."/>
            <person name="Zeng A.P."/>
            <person name="Brandt B.W."/>
            <person name="Cornell M.J."/>
            <person name="van den Hondel C.A."/>
            <person name="Visser J."/>
            <person name="Oliver S.G."/>
            <person name="Turner G."/>
        </authorList>
    </citation>
    <scope>GENOME REANNOTATION</scope>
    <source>
        <strain>FGSC A4 / ATCC 38163 / CBS 112.46 / NRRL 194 / M139</strain>
    </source>
</reference>
<reference key="3">
    <citation type="journal article" date="2012" name="PLoS ONE">
        <title>Identification and characterization of a novel diterpene gene cluster in Aspergillus nidulans.</title>
        <authorList>
            <person name="Bromann K."/>
            <person name="Toivari M."/>
            <person name="Viljanen K."/>
            <person name="Vuoristo A."/>
            <person name="Ruohonen L."/>
            <person name="Nakari-Setaelae T."/>
        </authorList>
    </citation>
    <scope>FUNCTION</scope>
</reference>
<reference key="4">
    <citation type="journal article" date="2016" name="Appl. Microbiol. Biotechnol.">
        <title>Engineering Aspergillus nidulans for heterologous ent-kaurene and gamma-terpinene production.</title>
        <authorList>
            <person name="Bromann K."/>
            <person name="Toivari M."/>
            <person name="Viljanen K."/>
            <person name="Ruohonen L."/>
            <person name="Nakari-Setaelae T."/>
        </authorList>
    </citation>
    <scope>FUNCTION</scope>
</reference>
<dbReference type="EMBL" id="AACD01000025">
    <property type="protein sequence ID" value="EAA64306.1"/>
    <property type="molecule type" value="Genomic_DNA"/>
</dbReference>
<dbReference type="EMBL" id="BN001307">
    <property type="protein sequence ID" value="CBF85190.1"/>
    <property type="molecule type" value="Genomic_DNA"/>
</dbReference>
<dbReference type="RefSeq" id="XP_659203.1">
    <property type="nucleotide sequence ID" value="XM_654111.1"/>
</dbReference>
<dbReference type="FunCoup" id="A0A1U8QL22">
    <property type="interactions" value="209"/>
</dbReference>
<dbReference type="STRING" id="227321.Q5BCY1"/>
<dbReference type="EnsemblFungi" id="CBF85190">
    <property type="protein sequence ID" value="CBF85190"/>
    <property type="gene ID" value="ANIA_01599"/>
</dbReference>
<dbReference type="GeneID" id="2875702"/>
<dbReference type="KEGG" id="ani:ANIA_01599"/>
<dbReference type="eggNOG" id="ENOG502QRYY">
    <property type="taxonomic scope" value="Eukaryota"/>
</dbReference>
<dbReference type="HOGENOM" id="CLU_006524_0_2_1"/>
<dbReference type="InParanoid" id="A0A1U8QL22"/>
<dbReference type="OMA" id="YQISHTA"/>
<dbReference type="OrthoDB" id="8062037at2759"/>
<dbReference type="Proteomes" id="UP000000560">
    <property type="component" value="Chromosome VII"/>
</dbReference>
<dbReference type="GO" id="GO:0005634">
    <property type="term" value="C:nucleus"/>
    <property type="evidence" value="ECO:0000318"/>
    <property type="project" value="GO_Central"/>
</dbReference>
<dbReference type="GO" id="GO:0000981">
    <property type="term" value="F:DNA-binding transcription factor activity, RNA polymerase II-specific"/>
    <property type="evidence" value="ECO:0000318"/>
    <property type="project" value="GO_Central"/>
</dbReference>
<dbReference type="GO" id="GO:0000976">
    <property type="term" value="F:transcription cis-regulatory region binding"/>
    <property type="evidence" value="ECO:0000318"/>
    <property type="project" value="GO_Central"/>
</dbReference>
<dbReference type="GO" id="GO:0008270">
    <property type="term" value="F:zinc ion binding"/>
    <property type="evidence" value="ECO:0007669"/>
    <property type="project" value="InterPro"/>
</dbReference>
<dbReference type="GO" id="GO:0006355">
    <property type="term" value="P:regulation of DNA-templated transcription"/>
    <property type="evidence" value="ECO:0000318"/>
    <property type="project" value="GO_Central"/>
</dbReference>
<dbReference type="CDD" id="cd12148">
    <property type="entry name" value="fungal_TF_MHR"/>
    <property type="match status" value="1"/>
</dbReference>
<dbReference type="CDD" id="cd00067">
    <property type="entry name" value="GAL4"/>
    <property type="match status" value="1"/>
</dbReference>
<dbReference type="Gene3D" id="4.10.240.10">
    <property type="entry name" value="Zn(2)-C6 fungal-type DNA-binding domain"/>
    <property type="match status" value="1"/>
</dbReference>
<dbReference type="InterPro" id="IPR051089">
    <property type="entry name" value="prtT"/>
</dbReference>
<dbReference type="InterPro" id="IPR036864">
    <property type="entry name" value="Zn2-C6_fun-type_DNA-bd_sf"/>
</dbReference>
<dbReference type="InterPro" id="IPR001138">
    <property type="entry name" value="Zn2Cys6_DnaBD"/>
</dbReference>
<dbReference type="PANTHER" id="PTHR31845">
    <property type="entry name" value="FINGER DOMAIN PROTEIN, PUTATIVE-RELATED"/>
    <property type="match status" value="1"/>
</dbReference>
<dbReference type="PANTHER" id="PTHR31845:SF39">
    <property type="entry name" value="TRANSCRIPTION FACTOR PBCR-RELATED"/>
    <property type="match status" value="1"/>
</dbReference>
<dbReference type="Pfam" id="PF00172">
    <property type="entry name" value="Zn_clus"/>
    <property type="match status" value="1"/>
</dbReference>
<dbReference type="SMART" id="SM00066">
    <property type="entry name" value="GAL4"/>
    <property type="match status" value="1"/>
</dbReference>
<dbReference type="SUPFAM" id="SSF57701">
    <property type="entry name" value="Zn2/Cys6 DNA-binding domain"/>
    <property type="match status" value="1"/>
</dbReference>
<dbReference type="PROSITE" id="PS00463">
    <property type="entry name" value="ZN2_CY6_FUNGAL_1"/>
    <property type="match status" value="1"/>
</dbReference>
<dbReference type="PROSITE" id="PS50048">
    <property type="entry name" value="ZN2_CY6_FUNGAL_2"/>
    <property type="match status" value="1"/>
</dbReference>
<name>PBCR_EMENI</name>
<protein>
    <recommendedName>
        <fullName evidence="5">Transcription factor pbcR</fullName>
    </recommendedName>
    <alternativeName>
        <fullName evidence="5">Pimaradiene biosynthesis cluster protein R</fullName>
    </alternativeName>
</protein>
<evidence type="ECO:0000255" key="1">
    <source>
        <dbReference type="PROSITE-ProRule" id="PRU00227"/>
    </source>
</evidence>
<evidence type="ECO:0000256" key="2">
    <source>
        <dbReference type="SAM" id="MobiDB-lite"/>
    </source>
</evidence>
<evidence type="ECO:0000269" key="3">
    <source>
    </source>
</evidence>
<evidence type="ECO:0000269" key="4">
    <source>
    </source>
</evidence>
<evidence type="ECO:0000303" key="5">
    <source>
    </source>
</evidence>